<gene>
    <name evidence="1" type="primary">leuA</name>
    <name type="ordered locus">lin2094</name>
</gene>
<protein>
    <recommendedName>
        <fullName evidence="1">2-isopropylmalate synthase</fullName>
        <ecNumber evidence="1">2.3.3.13</ecNumber>
    </recommendedName>
    <alternativeName>
        <fullName evidence="1">Alpha-IPM synthase</fullName>
    </alternativeName>
    <alternativeName>
        <fullName evidence="1">Alpha-isopropylmalate synthase</fullName>
    </alternativeName>
</protein>
<accession>Q92A28</accession>
<comment type="function">
    <text evidence="1">Catalyzes the condensation of the acetyl group of acetyl-CoA with 3-methyl-2-oxobutanoate (2-ketoisovalerate) to form 3-carboxy-3-hydroxy-4-methylpentanoate (2-isopropylmalate).</text>
</comment>
<comment type="catalytic activity">
    <reaction evidence="1">
        <text>3-methyl-2-oxobutanoate + acetyl-CoA + H2O = (2S)-2-isopropylmalate + CoA + H(+)</text>
        <dbReference type="Rhea" id="RHEA:21524"/>
        <dbReference type="ChEBI" id="CHEBI:1178"/>
        <dbReference type="ChEBI" id="CHEBI:11851"/>
        <dbReference type="ChEBI" id="CHEBI:15377"/>
        <dbReference type="ChEBI" id="CHEBI:15378"/>
        <dbReference type="ChEBI" id="CHEBI:57287"/>
        <dbReference type="ChEBI" id="CHEBI:57288"/>
        <dbReference type="EC" id="2.3.3.13"/>
    </reaction>
</comment>
<comment type="cofactor">
    <cofactor evidence="1">
        <name>Mn(2+)</name>
        <dbReference type="ChEBI" id="CHEBI:29035"/>
    </cofactor>
</comment>
<comment type="pathway">
    <text evidence="1">Amino-acid biosynthesis; L-leucine biosynthesis; L-leucine from 3-methyl-2-oxobutanoate: step 1/4.</text>
</comment>
<comment type="subunit">
    <text evidence="1">Homodimer.</text>
</comment>
<comment type="subcellular location">
    <subcellularLocation>
        <location evidence="1">Cytoplasm</location>
    </subcellularLocation>
</comment>
<comment type="similarity">
    <text evidence="1">Belongs to the alpha-IPM synthase/homocitrate synthase family. LeuA type 1 subfamily.</text>
</comment>
<dbReference type="EC" id="2.3.3.13" evidence="1"/>
<dbReference type="EMBL" id="AL596171">
    <property type="protein sequence ID" value="CAC97324.1"/>
    <property type="molecule type" value="Genomic_DNA"/>
</dbReference>
<dbReference type="PIR" id="AD1694">
    <property type="entry name" value="AD1694"/>
</dbReference>
<dbReference type="RefSeq" id="WP_010991746.1">
    <property type="nucleotide sequence ID" value="NC_003212.1"/>
</dbReference>
<dbReference type="SMR" id="Q92A28"/>
<dbReference type="STRING" id="272626.gene:17566452"/>
<dbReference type="KEGG" id="lin:leuA"/>
<dbReference type="eggNOG" id="COG0119">
    <property type="taxonomic scope" value="Bacteria"/>
</dbReference>
<dbReference type="HOGENOM" id="CLU_022158_0_1_9"/>
<dbReference type="OrthoDB" id="9804858at2"/>
<dbReference type="UniPathway" id="UPA00048">
    <property type="reaction ID" value="UER00070"/>
</dbReference>
<dbReference type="Proteomes" id="UP000002513">
    <property type="component" value="Chromosome"/>
</dbReference>
<dbReference type="GO" id="GO:0005737">
    <property type="term" value="C:cytoplasm"/>
    <property type="evidence" value="ECO:0007669"/>
    <property type="project" value="UniProtKB-SubCell"/>
</dbReference>
<dbReference type="GO" id="GO:0003852">
    <property type="term" value="F:2-isopropylmalate synthase activity"/>
    <property type="evidence" value="ECO:0007669"/>
    <property type="project" value="UniProtKB-UniRule"/>
</dbReference>
<dbReference type="GO" id="GO:0003985">
    <property type="term" value="F:acetyl-CoA C-acetyltransferase activity"/>
    <property type="evidence" value="ECO:0007669"/>
    <property type="project" value="UniProtKB-UniRule"/>
</dbReference>
<dbReference type="GO" id="GO:0030145">
    <property type="term" value="F:manganese ion binding"/>
    <property type="evidence" value="ECO:0007669"/>
    <property type="project" value="UniProtKB-UniRule"/>
</dbReference>
<dbReference type="GO" id="GO:0009098">
    <property type="term" value="P:L-leucine biosynthetic process"/>
    <property type="evidence" value="ECO:0007669"/>
    <property type="project" value="UniProtKB-UniRule"/>
</dbReference>
<dbReference type="CDD" id="cd07940">
    <property type="entry name" value="DRE_TIM_IPMS"/>
    <property type="match status" value="1"/>
</dbReference>
<dbReference type="FunFam" id="1.10.238.260:FF:000001">
    <property type="entry name" value="2-isopropylmalate synthase"/>
    <property type="match status" value="1"/>
</dbReference>
<dbReference type="FunFam" id="3.20.20.70:FF:000010">
    <property type="entry name" value="2-isopropylmalate synthase"/>
    <property type="match status" value="1"/>
</dbReference>
<dbReference type="FunFam" id="3.30.160.270:FF:000003">
    <property type="entry name" value="2-isopropylmalate synthase"/>
    <property type="match status" value="1"/>
</dbReference>
<dbReference type="Gene3D" id="1.10.238.260">
    <property type="match status" value="1"/>
</dbReference>
<dbReference type="Gene3D" id="3.30.160.270">
    <property type="match status" value="1"/>
</dbReference>
<dbReference type="Gene3D" id="3.20.20.70">
    <property type="entry name" value="Aldolase class I"/>
    <property type="match status" value="1"/>
</dbReference>
<dbReference type="HAMAP" id="MF_01025">
    <property type="entry name" value="LeuA_type1"/>
    <property type="match status" value="1"/>
</dbReference>
<dbReference type="InterPro" id="IPR050073">
    <property type="entry name" value="2-IPM_HCS-like"/>
</dbReference>
<dbReference type="InterPro" id="IPR013709">
    <property type="entry name" value="2-isopropylmalate_synth_dimer"/>
</dbReference>
<dbReference type="InterPro" id="IPR002034">
    <property type="entry name" value="AIPM/Hcit_synth_CS"/>
</dbReference>
<dbReference type="InterPro" id="IPR013785">
    <property type="entry name" value="Aldolase_TIM"/>
</dbReference>
<dbReference type="InterPro" id="IPR054691">
    <property type="entry name" value="LeuA/HCS_post-cat"/>
</dbReference>
<dbReference type="InterPro" id="IPR036230">
    <property type="entry name" value="LeuA_allosteric_dom_sf"/>
</dbReference>
<dbReference type="InterPro" id="IPR005671">
    <property type="entry name" value="LeuA_bact_synth"/>
</dbReference>
<dbReference type="InterPro" id="IPR000891">
    <property type="entry name" value="PYR_CT"/>
</dbReference>
<dbReference type="NCBIfam" id="TIGR00973">
    <property type="entry name" value="leuA_bact"/>
    <property type="match status" value="1"/>
</dbReference>
<dbReference type="NCBIfam" id="NF002086">
    <property type="entry name" value="PRK00915.1-3"/>
    <property type="match status" value="1"/>
</dbReference>
<dbReference type="NCBIfam" id="NF002088">
    <property type="entry name" value="PRK00915.1-5"/>
    <property type="match status" value="1"/>
</dbReference>
<dbReference type="PANTHER" id="PTHR10277:SF9">
    <property type="entry name" value="2-ISOPROPYLMALATE SYNTHASE 1, CHLOROPLASTIC-RELATED"/>
    <property type="match status" value="1"/>
</dbReference>
<dbReference type="PANTHER" id="PTHR10277">
    <property type="entry name" value="HOMOCITRATE SYNTHASE-RELATED"/>
    <property type="match status" value="1"/>
</dbReference>
<dbReference type="Pfam" id="PF22617">
    <property type="entry name" value="HCS_D2"/>
    <property type="match status" value="1"/>
</dbReference>
<dbReference type="Pfam" id="PF00682">
    <property type="entry name" value="HMGL-like"/>
    <property type="match status" value="1"/>
</dbReference>
<dbReference type="Pfam" id="PF08502">
    <property type="entry name" value="LeuA_dimer"/>
    <property type="match status" value="1"/>
</dbReference>
<dbReference type="SMART" id="SM00917">
    <property type="entry name" value="LeuA_dimer"/>
    <property type="match status" value="1"/>
</dbReference>
<dbReference type="SUPFAM" id="SSF110921">
    <property type="entry name" value="2-isopropylmalate synthase LeuA, allosteric (dimerisation) domain"/>
    <property type="match status" value="1"/>
</dbReference>
<dbReference type="SUPFAM" id="SSF51569">
    <property type="entry name" value="Aldolase"/>
    <property type="match status" value="1"/>
</dbReference>
<dbReference type="PROSITE" id="PS00815">
    <property type="entry name" value="AIPM_HOMOCIT_SYNTH_1"/>
    <property type="match status" value="1"/>
</dbReference>
<dbReference type="PROSITE" id="PS00816">
    <property type="entry name" value="AIPM_HOMOCIT_SYNTH_2"/>
    <property type="match status" value="1"/>
</dbReference>
<dbReference type="PROSITE" id="PS50991">
    <property type="entry name" value="PYR_CT"/>
    <property type="match status" value="1"/>
</dbReference>
<evidence type="ECO:0000255" key="1">
    <source>
        <dbReference type="HAMAP-Rule" id="MF_01025"/>
    </source>
</evidence>
<keyword id="KW-0028">Amino-acid biosynthesis</keyword>
<keyword id="KW-0100">Branched-chain amino acid biosynthesis</keyword>
<keyword id="KW-0963">Cytoplasm</keyword>
<keyword id="KW-0432">Leucine biosynthesis</keyword>
<keyword id="KW-0464">Manganese</keyword>
<keyword id="KW-0479">Metal-binding</keyword>
<keyword id="KW-0808">Transferase</keyword>
<sequence length="512" mass="56149">MKKIQFFDTTLRDGEQTPGVNFDVKEKIQIALQLEKLGIDVIEAGFPISSPGDFECVKAIAKAIKHCSVTGLARCVEADIDRAEEALKDAVSPQIHIFLATSDVHMEYKLKMSRAEVLASIKHHISYARQKFDVVQFSPEDATRSDRAFLIEAVQTAIDAGATVINIPDTVGYTNPTEFGQLFQDLRREIKQFDDIIFASHCHDDLGMATANALAAIENGARRVEGTINGIGERAGNTALEEVAVALHIRKDFYQAETNIVLNQFKNSSDLISRLSGMPVPRNKAVIGGNAYAHESGIHQDGVLKNPDTYEIITPALVGVDKNSLPLGKLSGKHAFNTRMEEMGYTLSEQEQKDAFKRFKQLADAKKDVTEEDLHALILGQSSESHDAFELKHLQVQYVTGGVQGAIVRIEERDGALIEDAATGSGSIEAIYNTINRLMKQDIELTDYRIQAITAGQDAQAEVHVVIKDDNGTEFHGIGIDFDVLTASAKAYLQASGKSKSTSKQADFEEVK</sequence>
<name>LEU1_LISIN</name>
<proteinExistence type="inferred from homology"/>
<feature type="chain" id="PRO_0000140359" description="2-isopropylmalate synthase">
    <location>
        <begin position="1"/>
        <end position="512"/>
    </location>
</feature>
<feature type="domain" description="Pyruvate carboxyltransferase" evidence="1">
    <location>
        <begin position="4"/>
        <end position="266"/>
    </location>
</feature>
<feature type="region of interest" description="Regulatory domain" evidence="1">
    <location>
        <begin position="390"/>
        <end position="512"/>
    </location>
</feature>
<feature type="binding site" evidence="1">
    <location>
        <position position="13"/>
    </location>
    <ligand>
        <name>Mn(2+)</name>
        <dbReference type="ChEBI" id="CHEBI:29035"/>
    </ligand>
</feature>
<feature type="binding site" evidence="1">
    <location>
        <position position="201"/>
    </location>
    <ligand>
        <name>Mn(2+)</name>
        <dbReference type="ChEBI" id="CHEBI:29035"/>
    </ligand>
</feature>
<feature type="binding site" evidence="1">
    <location>
        <position position="203"/>
    </location>
    <ligand>
        <name>Mn(2+)</name>
        <dbReference type="ChEBI" id="CHEBI:29035"/>
    </ligand>
</feature>
<feature type="binding site" evidence="1">
    <location>
        <position position="237"/>
    </location>
    <ligand>
        <name>Mn(2+)</name>
        <dbReference type="ChEBI" id="CHEBI:29035"/>
    </ligand>
</feature>
<organism>
    <name type="scientific">Listeria innocua serovar 6a (strain ATCC BAA-680 / CLIP 11262)</name>
    <dbReference type="NCBI Taxonomy" id="272626"/>
    <lineage>
        <taxon>Bacteria</taxon>
        <taxon>Bacillati</taxon>
        <taxon>Bacillota</taxon>
        <taxon>Bacilli</taxon>
        <taxon>Bacillales</taxon>
        <taxon>Listeriaceae</taxon>
        <taxon>Listeria</taxon>
    </lineage>
</organism>
<reference key="1">
    <citation type="journal article" date="2001" name="Science">
        <title>Comparative genomics of Listeria species.</title>
        <authorList>
            <person name="Glaser P."/>
            <person name="Frangeul L."/>
            <person name="Buchrieser C."/>
            <person name="Rusniok C."/>
            <person name="Amend A."/>
            <person name="Baquero F."/>
            <person name="Berche P."/>
            <person name="Bloecker H."/>
            <person name="Brandt P."/>
            <person name="Chakraborty T."/>
            <person name="Charbit A."/>
            <person name="Chetouani F."/>
            <person name="Couve E."/>
            <person name="de Daruvar A."/>
            <person name="Dehoux P."/>
            <person name="Domann E."/>
            <person name="Dominguez-Bernal G."/>
            <person name="Duchaud E."/>
            <person name="Durant L."/>
            <person name="Dussurget O."/>
            <person name="Entian K.-D."/>
            <person name="Fsihi H."/>
            <person name="Garcia-del Portillo F."/>
            <person name="Garrido P."/>
            <person name="Gautier L."/>
            <person name="Goebel W."/>
            <person name="Gomez-Lopez N."/>
            <person name="Hain T."/>
            <person name="Hauf J."/>
            <person name="Jackson D."/>
            <person name="Jones L.-M."/>
            <person name="Kaerst U."/>
            <person name="Kreft J."/>
            <person name="Kuhn M."/>
            <person name="Kunst F."/>
            <person name="Kurapkat G."/>
            <person name="Madueno E."/>
            <person name="Maitournam A."/>
            <person name="Mata Vicente J."/>
            <person name="Ng E."/>
            <person name="Nedjari H."/>
            <person name="Nordsiek G."/>
            <person name="Novella S."/>
            <person name="de Pablos B."/>
            <person name="Perez-Diaz J.-C."/>
            <person name="Purcell R."/>
            <person name="Remmel B."/>
            <person name="Rose M."/>
            <person name="Schlueter T."/>
            <person name="Simoes N."/>
            <person name="Tierrez A."/>
            <person name="Vazquez-Boland J.-A."/>
            <person name="Voss H."/>
            <person name="Wehland J."/>
            <person name="Cossart P."/>
        </authorList>
    </citation>
    <scope>NUCLEOTIDE SEQUENCE [LARGE SCALE GENOMIC DNA]</scope>
    <source>
        <strain>ATCC BAA-680 / CLIP 11262</strain>
    </source>
</reference>